<dbReference type="EMBL" id="CP000716">
    <property type="protein sequence ID" value="ABR30687.1"/>
    <property type="molecule type" value="Genomic_DNA"/>
</dbReference>
<dbReference type="RefSeq" id="WP_012057048.1">
    <property type="nucleotide sequence ID" value="NC_009616.1"/>
</dbReference>
<dbReference type="SMR" id="A6LL86"/>
<dbReference type="STRING" id="391009.Tmel_0826"/>
<dbReference type="KEGG" id="tme:Tmel_0826"/>
<dbReference type="eggNOG" id="COG1489">
    <property type="taxonomic scope" value="Bacteria"/>
</dbReference>
<dbReference type="HOGENOM" id="CLU_052299_1_0_0"/>
<dbReference type="OrthoDB" id="9802365at2"/>
<dbReference type="Proteomes" id="UP000001110">
    <property type="component" value="Chromosome"/>
</dbReference>
<dbReference type="GO" id="GO:0003677">
    <property type="term" value="F:DNA binding"/>
    <property type="evidence" value="ECO:0007669"/>
    <property type="project" value="InterPro"/>
</dbReference>
<dbReference type="CDD" id="cd22357">
    <property type="entry name" value="SfsA-like"/>
    <property type="match status" value="1"/>
</dbReference>
<dbReference type="Gene3D" id="2.40.50.580">
    <property type="match status" value="1"/>
</dbReference>
<dbReference type="Gene3D" id="3.40.1350.60">
    <property type="match status" value="1"/>
</dbReference>
<dbReference type="HAMAP" id="MF_00095">
    <property type="entry name" value="SfsA"/>
    <property type="match status" value="1"/>
</dbReference>
<dbReference type="InterPro" id="IPR005224">
    <property type="entry name" value="SfsA"/>
</dbReference>
<dbReference type="InterPro" id="IPR040452">
    <property type="entry name" value="SfsA_C"/>
</dbReference>
<dbReference type="InterPro" id="IPR041465">
    <property type="entry name" value="SfsA_N"/>
</dbReference>
<dbReference type="NCBIfam" id="TIGR00230">
    <property type="entry name" value="sfsA"/>
    <property type="match status" value="1"/>
</dbReference>
<dbReference type="PANTHER" id="PTHR30545">
    <property type="entry name" value="SUGAR FERMENTATION STIMULATION PROTEIN A"/>
    <property type="match status" value="1"/>
</dbReference>
<dbReference type="PANTHER" id="PTHR30545:SF2">
    <property type="entry name" value="SUGAR FERMENTATION STIMULATION PROTEIN A"/>
    <property type="match status" value="1"/>
</dbReference>
<dbReference type="Pfam" id="PF03749">
    <property type="entry name" value="SfsA"/>
    <property type="match status" value="1"/>
</dbReference>
<dbReference type="Pfam" id="PF17746">
    <property type="entry name" value="SfsA_N"/>
    <property type="match status" value="1"/>
</dbReference>
<evidence type="ECO:0000255" key="1">
    <source>
        <dbReference type="HAMAP-Rule" id="MF_00095"/>
    </source>
</evidence>
<accession>A6LL86</accession>
<comment type="similarity">
    <text evidence="1">Belongs to the SfsA family.</text>
</comment>
<sequence>MMNIIKIDNTQSGIFLERINKYLAKIYLNENVVDVHVHDPGRLKELLFKNNKVLVKKVNSTNRKTKYDLIAAKKEKEYVLVHSMYHRYIAEKILRKKYTHLKAEVKYKNSRIDFLAEDKFWIEIKGCTLSDGNMARFPDAPTKRGTKHLEDLMELKKQGFDTFIYFLIFANANYFSPNYETDLSFSKKLEEAYSLGVKIVPLLFSLENNWIVFKREIQLIFDG</sequence>
<gene>
    <name evidence="1" type="primary">sfsA</name>
    <name type="ordered locus">Tmel_0826</name>
</gene>
<name>SFSA_THEM4</name>
<organism>
    <name type="scientific">Thermosipho melanesiensis (strain DSM 12029 / CIP 104789 / BI429)</name>
    <dbReference type="NCBI Taxonomy" id="391009"/>
    <lineage>
        <taxon>Bacteria</taxon>
        <taxon>Thermotogati</taxon>
        <taxon>Thermotogota</taxon>
        <taxon>Thermotogae</taxon>
        <taxon>Thermotogales</taxon>
        <taxon>Fervidobacteriaceae</taxon>
        <taxon>Thermosipho</taxon>
    </lineage>
</organism>
<reference key="1">
    <citation type="submission" date="2007-05" db="EMBL/GenBank/DDBJ databases">
        <title>Complete sequence of Thermosipho melanesiensis BI429.</title>
        <authorList>
            <consortium name="US DOE Joint Genome Institute"/>
            <person name="Copeland A."/>
            <person name="Lucas S."/>
            <person name="Lapidus A."/>
            <person name="Barry K."/>
            <person name="Glavina del Rio T."/>
            <person name="Dalin E."/>
            <person name="Tice H."/>
            <person name="Pitluck S."/>
            <person name="Chertkov O."/>
            <person name="Brettin T."/>
            <person name="Bruce D."/>
            <person name="Detter J.C."/>
            <person name="Han C."/>
            <person name="Schmutz J."/>
            <person name="Larimer F."/>
            <person name="Land M."/>
            <person name="Hauser L."/>
            <person name="Kyrpides N."/>
            <person name="Mikhailova N."/>
            <person name="Nelson K."/>
            <person name="Gogarten J.P."/>
            <person name="Noll K."/>
            <person name="Richardson P."/>
        </authorList>
    </citation>
    <scope>NUCLEOTIDE SEQUENCE [LARGE SCALE GENOMIC DNA]</scope>
    <source>
        <strain>DSM 12029 / CIP 104789 / BI429</strain>
    </source>
</reference>
<proteinExistence type="inferred from homology"/>
<feature type="chain" id="PRO_0000340160" description="Sugar fermentation stimulation protein homolog">
    <location>
        <begin position="1"/>
        <end position="223"/>
    </location>
</feature>
<protein>
    <recommendedName>
        <fullName evidence="1">Sugar fermentation stimulation protein homolog</fullName>
    </recommendedName>
</protein>